<accession>O83052</accession>
<keyword id="KW-1185">Reference proteome</keyword>
<feature type="chain" id="PRO_0000202171" description="Uncharacterized protein TP_0007">
    <location>
        <begin position="1"/>
        <end position="216"/>
    </location>
</feature>
<organism>
    <name type="scientific">Treponema pallidum (strain Nichols)</name>
    <dbReference type="NCBI Taxonomy" id="243276"/>
    <lineage>
        <taxon>Bacteria</taxon>
        <taxon>Pseudomonadati</taxon>
        <taxon>Spirochaetota</taxon>
        <taxon>Spirochaetia</taxon>
        <taxon>Spirochaetales</taxon>
        <taxon>Treponemataceae</taxon>
        <taxon>Treponema</taxon>
    </lineage>
</organism>
<dbReference type="EMBL" id="AE000520">
    <property type="protein sequence ID" value="AAC65003.1"/>
    <property type="molecule type" value="Genomic_DNA"/>
</dbReference>
<dbReference type="PIR" id="F71378">
    <property type="entry name" value="F71378"/>
</dbReference>
<dbReference type="SMR" id="O83052"/>
<dbReference type="IntAct" id="O83052">
    <property type="interactions" value="8"/>
</dbReference>
<dbReference type="STRING" id="243276.TP_0007"/>
<dbReference type="EnsemblBacteria" id="AAC65003">
    <property type="protein sequence ID" value="AAC65003"/>
    <property type="gene ID" value="TP_0007"/>
</dbReference>
<dbReference type="KEGG" id="tpa:TP_0007"/>
<dbReference type="eggNOG" id="COG1609">
    <property type="taxonomic scope" value="Bacteria"/>
</dbReference>
<dbReference type="HOGENOM" id="CLU_1277152_0_0_12"/>
<dbReference type="Proteomes" id="UP000000811">
    <property type="component" value="Chromosome"/>
</dbReference>
<dbReference type="Gene3D" id="3.40.50.11390">
    <property type="match status" value="1"/>
</dbReference>
<dbReference type="InterPro" id="IPR024258">
    <property type="entry name" value="DUF3798"/>
</dbReference>
<dbReference type="Pfam" id="PF12683">
    <property type="entry name" value="DUF3798"/>
    <property type="match status" value="1"/>
</dbReference>
<sequence length="216" mass="23835">MLALAEDSTIKAIVVSQAVPGVSKAFGIIKSKRPDVLLFAGEPLEPVEMLQESADIVVSQDYLFGGYAVPWVAERMGARTLVHVSFPRHMSYPGLRVRRTVMRAACTDLGLSFAHEEAPDPVDGVSDGELEDFFHKTIVKWIKKYGKETLFYCTNDAHNRPLISALLKYGGMLIGATIFDYADALGVHYAELEDVYKIREKVEKSLVASAQRGALD</sequence>
<gene>
    <name type="ordered locus">TP_0007</name>
</gene>
<proteinExistence type="predicted"/>
<reference key="1">
    <citation type="journal article" date="1998" name="Science">
        <title>Complete genome sequence of Treponema pallidum, the syphilis spirochete.</title>
        <authorList>
            <person name="Fraser C.M."/>
            <person name="Norris S.J."/>
            <person name="Weinstock G.M."/>
            <person name="White O."/>
            <person name="Sutton G.G."/>
            <person name="Dodson R.J."/>
            <person name="Gwinn M.L."/>
            <person name="Hickey E.K."/>
            <person name="Clayton R.A."/>
            <person name="Ketchum K.A."/>
            <person name="Sodergren E."/>
            <person name="Hardham J.M."/>
            <person name="McLeod M.P."/>
            <person name="Salzberg S.L."/>
            <person name="Peterson J.D."/>
            <person name="Khalak H.G."/>
            <person name="Richardson D.L."/>
            <person name="Howell J.K."/>
            <person name="Chidambaram M."/>
            <person name="Utterback T.R."/>
            <person name="McDonald L.A."/>
            <person name="Artiach P."/>
            <person name="Bowman C."/>
            <person name="Cotton M.D."/>
            <person name="Fujii C."/>
            <person name="Garland S.A."/>
            <person name="Hatch B."/>
            <person name="Horst K."/>
            <person name="Roberts K.M."/>
            <person name="Sandusky M."/>
            <person name="Weidman J.F."/>
            <person name="Smith H.O."/>
            <person name="Venter J.C."/>
        </authorList>
    </citation>
    <scope>NUCLEOTIDE SEQUENCE [LARGE SCALE GENOMIC DNA]</scope>
    <source>
        <strain>Nichols</strain>
    </source>
</reference>
<name>Y007_TREPA</name>
<protein>
    <recommendedName>
        <fullName>Uncharacterized protein TP_0007</fullName>
    </recommendedName>
</protein>